<dbReference type="EMBL" id="CP000016">
    <property type="protein sequence ID" value="AAZ41234.1"/>
    <property type="molecule type" value="Genomic_DNA"/>
</dbReference>
<dbReference type="RefSeq" id="WP_011283145.1">
    <property type="nucleotide sequence ID" value="NC_007292.1"/>
</dbReference>
<dbReference type="SMR" id="Q491X0"/>
<dbReference type="STRING" id="291272.BPEN_636"/>
<dbReference type="KEGG" id="bpn:BPEN_636"/>
<dbReference type="eggNOG" id="COG0227">
    <property type="taxonomic scope" value="Bacteria"/>
</dbReference>
<dbReference type="HOGENOM" id="CLU_064548_3_1_6"/>
<dbReference type="OrthoDB" id="9805609at2"/>
<dbReference type="Proteomes" id="UP000007794">
    <property type="component" value="Chromosome"/>
</dbReference>
<dbReference type="GO" id="GO:1990904">
    <property type="term" value="C:ribonucleoprotein complex"/>
    <property type="evidence" value="ECO:0007669"/>
    <property type="project" value="UniProtKB-KW"/>
</dbReference>
<dbReference type="GO" id="GO:0005840">
    <property type="term" value="C:ribosome"/>
    <property type="evidence" value="ECO:0007669"/>
    <property type="project" value="UniProtKB-KW"/>
</dbReference>
<dbReference type="GO" id="GO:0003735">
    <property type="term" value="F:structural constituent of ribosome"/>
    <property type="evidence" value="ECO:0007669"/>
    <property type="project" value="InterPro"/>
</dbReference>
<dbReference type="GO" id="GO:0006412">
    <property type="term" value="P:translation"/>
    <property type="evidence" value="ECO:0007669"/>
    <property type="project" value="UniProtKB-UniRule"/>
</dbReference>
<dbReference type="FunFam" id="2.30.170.40:FF:000001">
    <property type="entry name" value="50S ribosomal protein L28"/>
    <property type="match status" value="1"/>
</dbReference>
<dbReference type="Gene3D" id="2.30.170.40">
    <property type="entry name" value="Ribosomal protein L28/L24"/>
    <property type="match status" value="1"/>
</dbReference>
<dbReference type="HAMAP" id="MF_00373">
    <property type="entry name" value="Ribosomal_bL28"/>
    <property type="match status" value="1"/>
</dbReference>
<dbReference type="InterPro" id="IPR050096">
    <property type="entry name" value="Bacterial_rp_bL28"/>
</dbReference>
<dbReference type="InterPro" id="IPR026569">
    <property type="entry name" value="Ribosomal_bL28"/>
</dbReference>
<dbReference type="InterPro" id="IPR034704">
    <property type="entry name" value="Ribosomal_bL28/bL31-like_sf"/>
</dbReference>
<dbReference type="InterPro" id="IPR001383">
    <property type="entry name" value="Ribosomal_bL28_bact-type"/>
</dbReference>
<dbReference type="InterPro" id="IPR037147">
    <property type="entry name" value="Ribosomal_bL28_sf"/>
</dbReference>
<dbReference type="NCBIfam" id="TIGR00009">
    <property type="entry name" value="L28"/>
    <property type="match status" value="1"/>
</dbReference>
<dbReference type="PANTHER" id="PTHR39080">
    <property type="entry name" value="50S RIBOSOMAL PROTEIN L28"/>
    <property type="match status" value="1"/>
</dbReference>
<dbReference type="PANTHER" id="PTHR39080:SF1">
    <property type="entry name" value="LARGE RIBOSOMAL SUBUNIT PROTEIN BL28A"/>
    <property type="match status" value="1"/>
</dbReference>
<dbReference type="Pfam" id="PF00830">
    <property type="entry name" value="Ribosomal_L28"/>
    <property type="match status" value="1"/>
</dbReference>
<dbReference type="SUPFAM" id="SSF143800">
    <property type="entry name" value="L28p-like"/>
    <property type="match status" value="1"/>
</dbReference>
<organism>
    <name type="scientific">Blochmanniella pennsylvanica (strain BPEN)</name>
    <dbReference type="NCBI Taxonomy" id="291272"/>
    <lineage>
        <taxon>Bacteria</taxon>
        <taxon>Pseudomonadati</taxon>
        <taxon>Pseudomonadota</taxon>
        <taxon>Gammaproteobacteria</taxon>
        <taxon>Enterobacterales</taxon>
        <taxon>Enterobacteriaceae</taxon>
        <taxon>ant endosymbionts</taxon>
        <taxon>Candidatus Blochmanniella</taxon>
    </lineage>
</organism>
<feature type="chain" id="PRO_1000007177" description="Large ribosomal subunit protein bL28">
    <location>
        <begin position="1"/>
        <end position="75"/>
    </location>
</feature>
<feature type="region of interest" description="Disordered" evidence="2">
    <location>
        <begin position="1"/>
        <end position="21"/>
    </location>
</feature>
<accession>Q491X0</accession>
<gene>
    <name evidence="1" type="primary">rpmB</name>
    <name type="ordered locus">BPEN_636</name>
</gene>
<proteinExistence type="inferred from homology"/>
<sequence length="75" mass="8842">MARVCQVTGKRPMSGNKRSHAMNATKRWFAPNIHSHRFWVASKKRFVALRLSTKGIRLIDKFGIEYFFTKIYPKK</sequence>
<name>RL28_BLOPB</name>
<evidence type="ECO:0000255" key="1">
    <source>
        <dbReference type="HAMAP-Rule" id="MF_00373"/>
    </source>
</evidence>
<evidence type="ECO:0000256" key="2">
    <source>
        <dbReference type="SAM" id="MobiDB-lite"/>
    </source>
</evidence>
<evidence type="ECO:0000305" key="3"/>
<comment type="similarity">
    <text evidence="1">Belongs to the bacterial ribosomal protein bL28 family.</text>
</comment>
<protein>
    <recommendedName>
        <fullName evidence="1">Large ribosomal subunit protein bL28</fullName>
    </recommendedName>
    <alternativeName>
        <fullName evidence="3">50S ribosomal protein L28</fullName>
    </alternativeName>
</protein>
<reference key="1">
    <citation type="journal article" date="2005" name="Genome Res.">
        <title>Genome sequence of Blochmannia pennsylvanicus indicates parallel evolutionary trends among bacterial mutualists of insects.</title>
        <authorList>
            <person name="Degnan P.H."/>
            <person name="Lazarus A.B."/>
            <person name="Wernegreen J.J."/>
        </authorList>
    </citation>
    <scope>NUCLEOTIDE SEQUENCE [LARGE SCALE GENOMIC DNA]</scope>
    <source>
        <strain>BPEN</strain>
    </source>
</reference>
<keyword id="KW-1185">Reference proteome</keyword>
<keyword id="KW-0687">Ribonucleoprotein</keyword>
<keyword id="KW-0689">Ribosomal protein</keyword>